<proteinExistence type="inferred from homology"/>
<name>CEMA_SPIOL</name>
<organism>
    <name type="scientific">Spinacia oleracea</name>
    <name type="common">Spinach</name>
    <dbReference type="NCBI Taxonomy" id="3562"/>
    <lineage>
        <taxon>Eukaryota</taxon>
        <taxon>Viridiplantae</taxon>
        <taxon>Streptophyta</taxon>
        <taxon>Embryophyta</taxon>
        <taxon>Tracheophyta</taxon>
        <taxon>Spermatophyta</taxon>
        <taxon>Magnoliopsida</taxon>
        <taxon>eudicotyledons</taxon>
        <taxon>Gunneridae</taxon>
        <taxon>Pentapetalae</taxon>
        <taxon>Caryophyllales</taxon>
        <taxon>Chenopodiaceae</taxon>
        <taxon>Chenopodioideae</taxon>
        <taxon>Anserineae</taxon>
        <taxon>Spinacia</taxon>
    </lineage>
</organism>
<protein>
    <recommendedName>
        <fullName evidence="1">Potassium/proton antiporter CemA</fullName>
    </recommendedName>
    <alternativeName>
        <fullName evidence="1">Chloroplast envelope membrane protein A</fullName>
        <shortName evidence="1">CemA</shortName>
    </alternativeName>
</protein>
<keyword id="KW-0050">Antiport</keyword>
<keyword id="KW-0150">Chloroplast</keyword>
<keyword id="KW-0375">Hydrogen ion transport</keyword>
<keyword id="KW-0406">Ion transport</keyword>
<keyword id="KW-0472">Membrane</keyword>
<keyword id="KW-0934">Plastid</keyword>
<keyword id="KW-1001">Plastid inner membrane</keyword>
<keyword id="KW-0630">Potassium</keyword>
<keyword id="KW-0633">Potassium transport</keyword>
<keyword id="KW-1185">Reference proteome</keyword>
<keyword id="KW-0812">Transmembrane</keyword>
<keyword id="KW-1133">Transmembrane helix</keyword>
<keyword id="KW-0813">Transport</keyword>
<accession>Q9M3L4</accession>
<evidence type="ECO:0000255" key="1">
    <source>
        <dbReference type="HAMAP-Rule" id="MF_01308"/>
    </source>
</evidence>
<evidence type="ECO:0000305" key="2"/>
<geneLocation type="chloroplast"/>
<sequence>MEKKKVFIPFLYLISIVFLPWWIYLSFQKSLESWVTTWWNTKQSETFLNDIQEKKLLEKFIELEELRLLDEMIKEYPETQLQKLGIGIHNETIQLIKMHNEDCIHMILHFSTNLICFLILGGYSILGNKELILLNSWVQEFLYNLSDTIKAFSILLVTDLCIGFHSPQGWELLIESIYKDFGFADNDQIISSLVSTFPVILDTILKYWIFRSLNRVSPSLVVIYHSMND</sequence>
<gene>
    <name evidence="1" type="primary">cemA</name>
</gene>
<feature type="chain" id="PRO_0000216663" description="Potassium/proton antiporter CemA">
    <location>
        <begin position="1"/>
        <end position="229"/>
    </location>
</feature>
<feature type="transmembrane region" description="Helical" evidence="1">
    <location>
        <begin position="7"/>
        <end position="27"/>
    </location>
</feature>
<feature type="transmembrane region" description="Helical" evidence="1">
    <location>
        <begin position="106"/>
        <end position="126"/>
    </location>
</feature>
<feature type="transmembrane region" description="Helical" evidence="1">
    <location>
        <begin position="154"/>
        <end position="174"/>
    </location>
</feature>
<feature type="transmembrane region" description="Helical" evidence="1">
    <location>
        <begin position="189"/>
        <end position="209"/>
    </location>
</feature>
<reference key="1">
    <citation type="journal article" date="2001" name="Plant Mol. Biol.">
        <title>The plastid chromosome of spinach (Spinacia oleracea): complete nucleotide sequence and gene organization.</title>
        <authorList>
            <person name="Schmitz-Linneweber C."/>
            <person name="Maier R.M."/>
            <person name="Alcaraz J.-P."/>
            <person name="Cottet A."/>
            <person name="Herrmann R.G."/>
            <person name="Mache R."/>
        </authorList>
    </citation>
    <scope>NUCLEOTIDE SEQUENCE [LARGE SCALE GENOMIC DNA]</scope>
    <source>
        <strain>cv. Geant d'hiver</strain>
        <strain>cv. Monatol</strain>
    </source>
</reference>
<dbReference type="EMBL" id="AJ400848">
    <property type="protein sequence ID" value="CAB88741.1"/>
    <property type="status" value="ALT_INIT"/>
    <property type="molecule type" value="Genomic_DNA"/>
</dbReference>
<dbReference type="RefSeq" id="NP_054948.1">
    <property type="nucleotide sequence ID" value="NC_002202.1"/>
</dbReference>
<dbReference type="FunCoup" id="Q9M3L4">
    <property type="interactions" value="42"/>
</dbReference>
<dbReference type="STRING" id="3562.Q9M3L4"/>
<dbReference type="GeneID" id="2715581"/>
<dbReference type="KEGG" id="soe:2715581"/>
<dbReference type="InParanoid" id="Q9M3L4"/>
<dbReference type="OrthoDB" id="993at2759"/>
<dbReference type="Proteomes" id="UP001155700">
    <property type="component" value="Chloroplast Pltd"/>
</dbReference>
<dbReference type="GO" id="GO:0009706">
    <property type="term" value="C:chloroplast inner membrane"/>
    <property type="evidence" value="ECO:0007669"/>
    <property type="project" value="UniProtKB-SubCell"/>
</dbReference>
<dbReference type="GO" id="GO:0015297">
    <property type="term" value="F:antiporter activity"/>
    <property type="evidence" value="ECO:0007669"/>
    <property type="project" value="UniProtKB-KW"/>
</dbReference>
<dbReference type="GO" id="GO:0015078">
    <property type="term" value="F:proton transmembrane transporter activity"/>
    <property type="evidence" value="ECO:0007669"/>
    <property type="project" value="UniProtKB-UniRule"/>
</dbReference>
<dbReference type="GO" id="GO:0006813">
    <property type="term" value="P:potassium ion transport"/>
    <property type="evidence" value="ECO:0007669"/>
    <property type="project" value="UniProtKB-UniRule"/>
</dbReference>
<dbReference type="HAMAP" id="MF_01308">
    <property type="entry name" value="CemA_PxcA"/>
    <property type="match status" value="1"/>
</dbReference>
<dbReference type="InterPro" id="IPR004282">
    <property type="entry name" value="CemA"/>
</dbReference>
<dbReference type="PANTHER" id="PTHR33650:SF2">
    <property type="entry name" value="CHLOROPLAST ENVELOPE MEMBRANE PROTEIN"/>
    <property type="match status" value="1"/>
</dbReference>
<dbReference type="PANTHER" id="PTHR33650">
    <property type="entry name" value="CHLOROPLAST ENVELOPE MEMBRANE PROTEIN-RELATED"/>
    <property type="match status" value="1"/>
</dbReference>
<dbReference type="Pfam" id="PF03040">
    <property type="entry name" value="CemA"/>
    <property type="match status" value="1"/>
</dbReference>
<comment type="function">
    <text evidence="1">Contributes to K(+)/H(+) antiport activity by supporting proton efflux to control proton extrusion and homeostasis in chloroplasts in a light-dependent manner to modulate photosynthesis. Prevents excessive induction of non-photochemical quenching (NPQ) under continuous-light conditions. Indirectly promotes efficient inorganic carbon uptake into chloroplasts.</text>
</comment>
<comment type="catalytic activity">
    <reaction evidence="1">
        <text>K(+)(in) + H(+)(out) = K(+)(out) + H(+)(in)</text>
        <dbReference type="Rhea" id="RHEA:29467"/>
        <dbReference type="ChEBI" id="CHEBI:15378"/>
        <dbReference type="ChEBI" id="CHEBI:29103"/>
    </reaction>
</comment>
<comment type="subcellular location">
    <subcellularLocation>
        <location evidence="1">Plastid</location>
        <location evidence="1">Chloroplast inner membrane</location>
        <topology evidence="1">Multi-pass membrane protein</topology>
    </subcellularLocation>
</comment>
<comment type="similarity">
    <text evidence="1 2">Belongs to the CemA family.</text>
</comment>
<comment type="sequence caution" evidence="2">
    <conflict type="erroneous initiation">
        <sequence resource="EMBL-CDS" id="CAB88741"/>
    </conflict>
    <text>Extended N-terminus.</text>
</comment>